<proteinExistence type="evidence at transcript level"/>
<dbReference type="EMBL" id="GU292962">
    <property type="protein sequence ID" value="ADB56778.1"/>
    <property type="molecule type" value="mRNA"/>
</dbReference>
<dbReference type="SMR" id="D2Y285"/>
<dbReference type="ArachnoServer" id="AS001936">
    <property type="toxin name" value="U11-theraphotoxin-Hhn1o"/>
</dbReference>
<dbReference type="GO" id="GO:0005576">
    <property type="term" value="C:extracellular region"/>
    <property type="evidence" value="ECO:0007669"/>
    <property type="project" value="UniProtKB-SubCell"/>
</dbReference>
<dbReference type="GO" id="GO:0019871">
    <property type="term" value="F:sodium channel inhibitor activity"/>
    <property type="evidence" value="ECO:0007669"/>
    <property type="project" value="InterPro"/>
</dbReference>
<dbReference type="GO" id="GO:0090729">
    <property type="term" value="F:toxin activity"/>
    <property type="evidence" value="ECO:0007669"/>
    <property type="project" value="UniProtKB-KW"/>
</dbReference>
<dbReference type="InterPro" id="IPR012627">
    <property type="entry name" value="Toxin_22"/>
</dbReference>
<dbReference type="Pfam" id="PF08092">
    <property type="entry name" value="Toxin_22"/>
    <property type="match status" value="1"/>
</dbReference>
<accession>D2Y285</accession>
<comment type="function">
    <text evidence="1">Probable ion channel inhibitor.</text>
</comment>
<comment type="subcellular location">
    <subcellularLocation>
        <location evidence="1">Secreted</location>
    </subcellularLocation>
</comment>
<comment type="tissue specificity">
    <text>Expressed by the venom gland.</text>
</comment>
<comment type="domain">
    <text evidence="1">The presence of a 'disulfide through disulfide knot' structurally defines this protein as a knottin.</text>
</comment>
<comment type="similarity">
    <text evidence="4">Belongs to the neurotoxin 14 (magi-1) family. 01 (HNTX-16) subfamily.</text>
</comment>
<comment type="caution">
    <text evidence="4">While it is structurally defined as a knottin it lacks the conserved Cys residue in position 110.</text>
</comment>
<evidence type="ECO:0000250" key="1"/>
<evidence type="ECO:0000255" key="2"/>
<evidence type="ECO:0000256" key="3">
    <source>
        <dbReference type="SAM" id="MobiDB-lite"/>
    </source>
</evidence>
<evidence type="ECO:0000305" key="4"/>
<reference key="1">
    <citation type="journal article" date="2010" name="J. Proteome Res.">
        <title>Molecular diversification of peptide toxins from the tarantula Haplopelma hainanum (Ornithoctonus hainana) venom based on transcriptomic, peptidomic, and genomic analyses.</title>
        <authorList>
            <person name="Tang X."/>
            <person name="Zhang Y."/>
            <person name="Hu W."/>
            <person name="Xu D."/>
            <person name="Tao H."/>
            <person name="Yang X."/>
            <person name="Li Y."/>
            <person name="Jiang L."/>
            <person name="Liang S."/>
        </authorList>
    </citation>
    <scope>NUCLEOTIDE SEQUENCE [LARGE SCALE MRNA]</scope>
    <source>
        <tissue>Venom gland</tissue>
    </source>
</reference>
<feature type="signal peptide" evidence="2">
    <location>
        <begin position="1"/>
        <end position="21"/>
    </location>
</feature>
<feature type="propeptide" id="PRO_0000400945" evidence="1">
    <location>
        <begin position="22"/>
        <end position="74"/>
    </location>
</feature>
<feature type="peptide" id="PRO_0000400946" description="U11-theraphotoxin-Hhn1o">
    <location>
        <begin position="75"/>
        <end position="113"/>
    </location>
</feature>
<feature type="region of interest" description="Disordered" evidence="3">
    <location>
        <begin position="61"/>
        <end position="83"/>
    </location>
</feature>
<feature type="disulfide bond" evidence="1">
    <location>
        <begin position="75"/>
        <end position="90"/>
    </location>
</feature>
<feature type="disulfide bond" evidence="1">
    <location>
        <begin position="82"/>
        <end position="95"/>
    </location>
</feature>
<name>H16O1_CYRHA</name>
<keyword id="KW-1015">Disulfide bond</keyword>
<keyword id="KW-0872">Ion channel impairing toxin</keyword>
<keyword id="KW-0960">Knottin</keyword>
<keyword id="KW-0964">Secreted</keyword>
<keyword id="KW-0732">Signal</keyword>
<keyword id="KW-0800">Toxin</keyword>
<organism>
    <name type="scientific">Cyriopagopus hainanus</name>
    <name type="common">Chinese bird spider</name>
    <name type="synonym">Haplopelma hainanum</name>
    <dbReference type="NCBI Taxonomy" id="209901"/>
    <lineage>
        <taxon>Eukaryota</taxon>
        <taxon>Metazoa</taxon>
        <taxon>Ecdysozoa</taxon>
        <taxon>Arthropoda</taxon>
        <taxon>Chelicerata</taxon>
        <taxon>Arachnida</taxon>
        <taxon>Araneae</taxon>
        <taxon>Mygalomorphae</taxon>
        <taxon>Theraphosidae</taxon>
        <taxon>Haplopelma</taxon>
    </lineage>
</organism>
<sequence length="113" mass="13149">MNTVRVTFLLVFVLAVSLGQADKDENRMEMQEKTEQGKSYLDFAENLLLQKLEELEAKLLEEDSEESRNSRQKRCIGEGVPCDENDPRCCSGLVCLKPTLHGIWYKSYYYYKK</sequence>
<protein>
    <recommendedName>
        <fullName>U11-theraphotoxin-Hhn1o</fullName>
        <shortName>U11-TRTX-Hhn1o</shortName>
    </recommendedName>
    <alternativeName>
        <fullName>Hainantoxin-XVI-15</fullName>
        <shortName>HNTX-XVI-15</shortName>
    </alternativeName>
</protein>